<sequence>MKVRSSIKSLKNRHRDCQVVKRRGRVYVINKTDPRFKARAG</sequence>
<evidence type="ECO:0000255" key="1">
    <source>
        <dbReference type="HAMAP-Rule" id="MF_00251"/>
    </source>
</evidence>
<evidence type="ECO:0000305" key="2"/>
<proteinExistence type="inferred from homology"/>
<gene>
    <name evidence="1" type="primary">rpmJ</name>
    <name type="ordered locus">Mmar10_2527</name>
</gene>
<accession>Q0ALN0</accession>
<protein>
    <recommendedName>
        <fullName evidence="1">Large ribosomal subunit protein bL36</fullName>
    </recommendedName>
    <alternativeName>
        <fullName evidence="2">50S ribosomal protein L36</fullName>
    </alternativeName>
</protein>
<organism>
    <name type="scientific">Maricaulis maris (strain MCS10)</name>
    <name type="common">Caulobacter maris</name>
    <dbReference type="NCBI Taxonomy" id="394221"/>
    <lineage>
        <taxon>Bacteria</taxon>
        <taxon>Pseudomonadati</taxon>
        <taxon>Pseudomonadota</taxon>
        <taxon>Alphaproteobacteria</taxon>
        <taxon>Maricaulales</taxon>
        <taxon>Maricaulaceae</taxon>
        <taxon>Maricaulis</taxon>
    </lineage>
</organism>
<feature type="chain" id="PRO_0000302236" description="Large ribosomal subunit protein bL36">
    <location>
        <begin position="1"/>
        <end position="41"/>
    </location>
</feature>
<name>RL36_MARMM</name>
<dbReference type="EMBL" id="CP000449">
    <property type="protein sequence ID" value="ABI66813.1"/>
    <property type="molecule type" value="Genomic_DNA"/>
</dbReference>
<dbReference type="RefSeq" id="WP_011644457.1">
    <property type="nucleotide sequence ID" value="NC_008347.1"/>
</dbReference>
<dbReference type="SMR" id="Q0ALN0"/>
<dbReference type="STRING" id="394221.Mmar10_2527"/>
<dbReference type="KEGG" id="mmr:Mmar10_2527"/>
<dbReference type="eggNOG" id="COG0257">
    <property type="taxonomic scope" value="Bacteria"/>
</dbReference>
<dbReference type="HOGENOM" id="CLU_135723_3_2_5"/>
<dbReference type="OrthoDB" id="9801558at2"/>
<dbReference type="Proteomes" id="UP000001964">
    <property type="component" value="Chromosome"/>
</dbReference>
<dbReference type="GO" id="GO:1990904">
    <property type="term" value="C:ribonucleoprotein complex"/>
    <property type="evidence" value="ECO:0007669"/>
    <property type="project" value="UniProtKB-KW"/>
</dbReference>
<dbReference type="GO" id="GO:0005840">
    <property type="term" value="C:ribosome"/>
    <property type="evidence" value="ECO:0007669"/>
    <property type="project" value="UniProtKB-KW"/>
</dbReference>
<dbReference type="GO" id="GO:0003735">
    <property type="term" value="F:structural constituent of ribosome"/>
    <property type="evidence" value="ECO:0007669"/>
    <property type="project" value="InterPro"/>
</dbReference>
<dbReference type="GO" id="GO:0006412">
    <property type="term" value="P:translation"/>
    <property type="evidence" value="ECO:0007669"/>
    <property type="project" value="UniProtKB-UniRule"/>
</dbReference>
<dbReference type="HAMAP" id="MF_00251">
    <property type="entry name" value="Ribosomal_bL36"/>
    <property type="match status" value="1"/>
</dbReference>
<dbReference type="InterPro" id="IPR000473">
    <property type="entry name" value="Ribosomal_bL36"/>
</dbReference>
<dbReference type="InterPro" id="IPR035977">
    <property type="entry name" value="Ribosomal_bL36_sp"/>
</dbReference>
<dbReference type="InterPro" id="IPR047621">
    <property type="entry name" value="Ribosomal_L36_bact"/>
</dbReference>
<dbReference type="NCBIfam" id="NF002021">
    <property type="entry name" value="PRK00831.1"/>
    <property type="match status" value="1"/>
</dbReference>
<dbReference type="NCBIfam" id="TIGR01022">
    <property type="entry name" value="rpmJ_bact"/>
    <property type="match status" value="1"/>
</dbReference>
<dbReference type="PANTHER" id="PTHR47781">
    <property type="entry name" value="50S RIBOSOMAL PROTEIN L36 2"/>
    <property type="match status" value="1"/>
</dbReference>
<dbReference type="PANTHER" id="PTHR47781:SF1">
    <property type="entry name" value="LARGE RIBOSOMAL SUBUNIT PROTEIN BL36B"/>
    <property type="match status" value="1"/>
</dbReference>
<dbReference type="Pfam" id="PF00444">
    <property type="entry name" value="Ribosomal_L36"/>
    <property type="match status" value="1"/>
</dbReference>
<dbReference type="SUPFAM" id="SSF57840">
    <property type="entry name" value="Ribosomal protein L36"/>
    <property type="match status" value="1"/>
</dbReference>
<comment type="similarity">
    <text evidence="1">Belongs to the bacterial ribosomal protein bL36 family.</text>
</comment>
<keyword id="KW-1185">Reference proteome</keyword>
<keyword id="KW-0687">Ribonucleoprotein</keyword>
<keyword id="KW-0689">Ribosomal protein</keyword>
<reference key="1">
    <citation type="submission" date="2006-08" db="EMBL/GenBank/DDBJ databases">
        <title>Complete sequence of Maricaulis maris MCS10.</title>
        <authorList>
            <consortium name="US DOE Joint Genome Institute"/>
            <person name="Copeland A."/>
            <person name="Lucas S."/>
            <person name="Lapidus A."/>
            <person name="Barry K."/>
            <person name="Detter J.C."/>
            <person name="Glavina del Rio T."/>
            <person name="Hammon N."/>
            <person name="Israni S."/>
            <person name="Dalin E."/>
            <person name="Tice H."/>
            <person name="Pitluck S."/>
            <person name="Saunders E."/>
            <person name="Brettin T."/>
            <person name="Bruce D."/>
            <person name="Han C."/>
            <person name="Tapia R."/>
            <person name="Gilna P."/>
            <person name="Schmutz J."/>
            <person name="Larimer F."/>
            <person name="Land M."/>
            <person name="Hauser L."/>
            <person name="Kyrpides N."/>
            <person name="Mikhailova N."/>
            <person name="Viollier P."/>
            <person name="Stephens C."/>
            <person name="Richardson P."/>
        </authorList>
    </citation>
    <scope>NUCLEOTIDE SEQUENCE [LARGE SCALE GENOMIC DNA]</scope>
    <source>
        <strain>MCS10</strain>
    </source>
</reference>